<gene>
    <name evidence="1" type="primary">atpA</name>
    <name type="ordered locus">BARBAKC583_0112</name>
</gene>
<protein>
    <recommendedName>
        <fullName evidence="1">ATP synthase subunit alpha</fullName>
        <ecNumber evidence="1">7.1.2.2</ecNumber>
    </recommendedName>
    <alternativeName>
        <fullName evidence="1">ATP synthase F1 sector subunit alpha</fullName>
    </alternativeName>
    <alternativeName>
        <fullName evidence="1">F-ATPase subunit alpha</fullName>
    </alternativeName>
</protein>
<accession>A1UR47</accession>
<organism>
    <name type="scientific">Bartonella bacilliformis (strain ATCC 35685 / KC583 / Herrer 020/F12,63)</name>
    <dbReference type="NCBI Taxonomy" id="360095"/>
    <lineage>
        <taxon>Bacteria</taxon>
        <taxon>Pseudomonadati</taxon>
        <taxon>Pseudomonadota</taxon>
        <taxon>Alphaproteobacteria</taxon>
        <taxon>Hyphomicrobiales</taxon>
        <taxon>Bartonellaceae</taxon>
        <taxon>Bartonella</taxon>
    </lineage>
</organism>
<evidence type="ECO:0000255" key="1">
    <source>
        <dbReference type="HAMAP-Rule" id="MF_01346"/>
    </source>
</evidence>
<proteinExistence type="inferred from homology"/>
<feature type="chain" id="PRO_0000302628" description="ATP synthase subunit alpha">
    <location>
        <begin position="1"/>
        <end position="511"/>
    </location>
</feature>
<feature type="binding site" evidence="1">
    <location>
        <begin position="169"/>
        <end position="176"/>
    </location>
    <ligand>
        <name>ATP</name>
        <dbReference type="ChEBI" id="CHEBI:30616"/>
    </ligand>
</feature>
<feature type="site" description="Required for activity" evidence="1">
    <location>
        <position position="372"/>
    </location>
</feature>
<sequence>MDIRPSEISKILKEQIKNFDQEAEFSEIGWVLSVGDGIARVYGLDNVQAGEMVSFSNGVQGMALNLEMDNVGVVIFGSDRDIREGDTVKRLGSIVDVPVGPELLGRVVDALGNPIDGKGPLNAKNRRRVDVKAPGIIPRQSVHEPMSTGLKAIDALIPIGRGQRELVIGDRQTGKTAILLDTFLNQKPFHENEAGSDQDKVYCIYVAIGQKRSTVAQFVKVLEERGALDYSIIVAATASDPAPMQFIAPLAGCAMGEYFRDNGQHALIGYDDLSKQAVAYRQMSLLLRRPPGREAYPGDVFYLHSRLLERAAKLNADNGSGSLTALPVIETQANDVSAYIPTNVISITDGQIFLETNLFYQGIRPAVNVGLSVSRVGSAAQIKAMKQVAGSIKGELAQYREMAAFAQFGSDLDASTQRLLNRGARLTELLKQPQFSPLKTEEQVVTIFAGVNGYLDALAVSDVGRFERGLLALLRSDHQELLNAIASQKQITDELKGKLVAILDRYAKNFS</sequence>
<reference key="1">
    <citation type="submission" date="2006-12" db="EMBL/GenBank/DDBJ databases">
        <authorList>
            <person name="Hendrix L."/>
            <person name="Mohamoud Y."/>
            <person name="Radune D."/>
            <person name="Shvartsbeyn A."/>
            <person name="Daugherty S."/>
            <person name="Dodson R."/>
            <person name="Durkin A.S."/>
            <person name="Harkins D."/>
            <person name="Huot H."/>
            <person name="Kothari S.P."/>
            <person name="Madupu R."/>
            <person name="Li J."/>
            <person name="Nelson W.C."/>
            <person name="Shrivastava S."/>
            <person name="Giglio M.G."/>
            <person name="Haft D."/>
            <person name="Selengut J."/>
            <person name="Fraser-Ligget C."/>
            <person name="Seshadri R."/>
        </authorList>
    </citation>
    <scope>NUCLEOTIDE SEQUENCE [LARGE SCALE GENOMIC DNA]</scope>
    <source>
        <strain>ATCC 35685 / KC583 / Herrer 020/F12,63</strain>
    </source>
</reference>
<name>ATPA_BARBK</name>
<dbReference type="EC" id="7.1.2.2" evidence="1"/>
<dbReference type="EMBL" id="CP000524">
    <property type="protein sequence ID" value="ABM45491.1"/>
    <property type="molecule type" value="Genomic_DNA"/>
</dbReference>
<dbReference type="RefSeq" id="WP_005765870.1">
    <property type="nucleotide sequence ID" value="NC_008783.1"/>
</dbReference>
<dbReference type="SMR" id="A1UR47"/>
<dbReference type="STRING" id="360095.BARBAKC583_0112"/>
<dbReference type="GeneID" id="4684449"/>
<dbReference type="KEGG" id="bbk:BARBAKC583_0112"/>
<dbReference type="PATRIC" id="fig|360095.6.peg.111"/>
<dbReference type="eggNOG" id="COG0056">
    <property type="taxonomic scope" value="Bacteria"/>
</dbReference>
<dbReference type="HOGENOM" id="CLU_010091_2_1_5"/>
<dbReference type="OrthoDB" id="9803053at2"/>
<dbReference type="Proteomes" id="UP000000643">
    <property type="component" value="Chromosome"/>
</dbReference>
<dbReference type="GO" id="GO:0005886">
    <property type="term" value="C:plasma membrane"/>
    <property type="evidence" value="ECO:0007669"/>
    <property type="project" value="UniProtKB-SubCell"/>
</dbReference>
<dbReference type="GO" id="GO:0045259">
    <property type="term" value="C:proton-transporting ATP synthase complex"/>
    <property type="evidence" value="ECO:0007669"/>
    <property type="project" value="UniProtKB-KW"/>
</dbReference>
<dbReference type="GO" id="GO:0043531">
    <property type="term" value="F:ADP binding"/>
    <property type="evidence" value="ECO:0007669"/>
    <property type="project" value="TreeGrafter"/>
</dbReference>
<dbReference type="GO" id="GO:0005524">
    <property type="term" value="F:ATP binding"/>
    <property type="evidence" value="ECO:0007669"/>
    <property type="project" value="UniProtKB-UniRule"/>
</dbReference>
<dbReference type="GO" id="GO:0046933">
    <property type="term" value="F:proton-transporting ATP synthase activity, rotational mechanism"/>
    <property type="evidence" value="ECO:0007669"/>
    <property type="project" value="UniProtKB-UniRule"/>
</dbReference>
<dbReference type="CDD" id="cd18113">
    <property type="entry name" value="ATP-synt_F1_alpha_C"/>
    <property type="match status" value="1"/>
</dbReference>
<dbReference type="CDD" id="cd18116">
    <property type="entry name" value="ATP-synt_F1_alpha_N"/>
    <property type="match status" value="1"/>
</dbReference>
<dbReference type="CDD" id="cd01132">
    <property type="entry name" value="F1-ATPase_alpha_CD"/>
    <property type="match status" value="1"/>
</dbReference>
<dbReference type="FunFam" id="1.20.150.20:FF:000001">
    <property type="entry name" value="ATP synthase subunit alpha"/>
    <property type="match status" value="1"/>
</dbReference>
<dbReference type="FunFam" id="2.40.30.20:FF:000001">
    <property type="entry name" value="ATP synthase subunit alpha"/>
    <property type="match status" value="1"/>
</dbReference>
<dbReference type="FunFam" id="3.40.50.300:FF:002432">
    <property type="entry name" value="ATP synthase subunit alpha, mitochondrial"/>
    <property type="match status" value="1"/>
</dbReference>
<dbReference type="Gene3D" id="2.40.30.20">
    <property type="match status" value="1"/>
</dbReference>
<dbReference type="Gene3D" id="1.20.150.20">
    <property type="entry name" value="ATP synthase alpha/beta chain, C-terminal domain"/>
    <property type="match status" value="1"/>
</dbReference>
<dbReference type="Gene3D" id="3.40.50.300">
    <property type="entry name" value="P-loop containing nucleotide triphosphate hydrolases"/>
    <property type="match status" value="1"/>
</dbReference>
<dbReference type="HAMAP" id="MF_01346">
    <property type="entry name" value="ATP_synth_alpha_bact"/>
    <property type="match status" value="1"/>
</dbReference>
<dbReference type="InterPro" id="IPR023366">
    <property type="entry name" value="ATP_synth_asu-like_sf"/>
</dbReference>
<dbReference type="InterPro" id="IPR000793">
    <property type="entry name" value="ATP_synth_asu_C"/>
</dbReference>
<dbReference type="InterPro" id="IPR038376">
    <property type="entry name" value="ATP_synth_asu_C_sf"/>
</dbReference>
<dbReference type="InterPro" id="IPR033732">
    <property type="entry name" value="ATP_synth_F1_a_nt-bd_dom"/>
</dbReference>
<dbReference type="InterPro" id="IPR005294">
    <property type="entry name" value="ATP_synth_F1_asu"/>
</dbReference>
<dbReference type="InterPro" id="IPR020003">
    <property type="entry name" value="ATPase_a/bsu_AS"/>
</dbReference>
<dbReference type="InterPro" id="IPR004100">
    <property type="entry name" value="ATPase_F1/V1/A1_a/bsu_N"/>
</dbReference>
<dbReference type="InterPro" id="IPR036121">
    <property type="entry name" value="ATPase_F1/V1/A1_a/bsu_N_sf"/>
</dbReference>
<dbReference type="InterPro" id="IPR000194">
    <property type="entry name" value="ATPase_F1/V1/A1_a/bsu_nucl-bd"/>
</dbReference>
<dbReference type="InterPro" id="IPR027417">
    <property type="entry name" value="P-loop_NTPase"/>
</dbReference>
<dbReference type="NCBIfam" id="TIGR00962">
    <property type="entry name" value="atpA"/>
    <property type="match status" value="1"/>
</dbReference>
<dbReference type="NCBIfam" id="NF009884">
    <property type="entry name" value="PRK13343.1"/>
    <property type="match status" value="1"/>
</dbReference>
<dbReference type="PANTHER" id="PTHR48082">
    <property type="entry name" value="ATP SYNTHASE SUBUNIT ALPHA, MITOCHONDRIAL"/>
    <property type="match status" value="1"/>
</dbReference>
<dbReference type="PANTHER" id="PTHR48082:SF2">
    <property type="entry name" value="ATP SYNTHASE SUBUNIT ALPHA, MITOCHONDRIAL"/>
    <property type="match status" value="1"/>
</dbReference>
<dbReference type="Pfam" id="PF00006">
    <property type="entry name" value="ATP-synt_ab"/>
    <property type="match status" value="1"/>
</dbReference>
<dbReference type="Pfam" id="PF00306">
    <property type="entry name" value="ATP-synt_ab_C"/>
    <property type="match status" value="1"/>
</dbReference>
<dbReference type="Pfam" id="PF02874">
    <property type="entry name" value="ATP-synt_ab_N"/>
    <property type="match status" value="1"/>
</dbReference>
<dbReference type="PIRSF" id="PIRSF039088">
    <property type="entry name" value="F_ATPase_subunit_alpha"/>
    <property type="match status" value="1"/>
</dbReference>
<dbReference type="SUPFAM" id="SSF47917">
    <property type="entry name" value="C-terminal domain of alpha and beta subunits of F1 ATP synthase"/>
    <property type="match status" value="1"/>
</dbReference>
<dbReference type="SUPFAM" id="SSF50615">
    <property type="entry name" value="N-terminal domain of alpha and beta subunits of F1 ATP synthase"/>
    <property type="match status" value="1"/>
</dbReference>
<dbReference type="SUPFAM" id="SSF52540">
    <property type="entry name" value="P-loop containing nucleoside triphosphate hydrolases"/>
    <property type="match status" value="1"/>
</dbReference>
<dbReference type="PROSITE" id="PS00152">
    <property type="entry name" value="ATPASE_ALPHA_BETA"/>
    <property type="match status" value="1"/>
</dbReference>
<comment type="function">
    <text evidence="1">Produces ATP from ADP in the presence of a proton gradient across the membrane. The alpha chain is a regulatory subunit.</text>
</comment>
<comment type="catalytic activity">
    <reaction evidence="1">
        <text>ATP + H2O + 4 H(+)(in) = ADP + phosphate + 5 H(+)(out)</text>
        <dbReference type="Rhea" id="RHEA:57720"/>
        <dbReference type="ChEBI" id="CHEBI:15377"/>
        <dbReference type="ChEBI" id="CHEBI:15378"/>
        <dbReference type="ChEBI" id="CHEBI:30616"/>
        <dbReference type="ChEBI" id="CHEBI:43474"/>
        <dbReference type="ChEBI" id="CHEBI:456216"/>
        <dbReference type="EC" id="7.1.2.2"/>
    </reaction>
</comment>
<comment type="subunit">
    <text evidence="1">F-type ATPases have 2 components, CF(1) - the catalytic core - and CF(0) - the membrane proton channel. CF(1) has five subunits: alpha(3), beta(3), gamma(1), delta(1), epsilon(1). CF(0) has three main subunits: a(1), b(2) and c(9-12). The alpha and beta chains form an alternating ring which encloses part of the gamma chain. CF(1) is attached to CF(0) by a central stalk formed by the gamma and epsilon chains, while a peripheral stalk is formed by the delta and b chains.</text>
</comment>
<comment type="subcellular location">
    <subcellularLocation>
        <location evidence="1">Cell inner membrane</location>
        <topology evidence="1">Peripheral membrane protein</topology>
    </subcellularLocation>
</comment>
<comment type="similarity">
    <text evidence="1">Belongs to the ATPase alpha/beta chains family.</text>
</comment>
<keyword id="KW-0066">ATP synthesis</keyword>
<keyword id="KW-0067">ATP-binding</keyword>
<keyword id="KW-0997">Cell inner membrane</keyword>
<keyword id="KW-1003">Cell membrane</keyword>
<keyword id="KW-0139">CF(1)</keyword>
<keyword id="KW-0375">Hydrogen ion transport</keyword>
<keyword id="KW-0406">Ion transport</keyword>
<keyword id="KW-0472">Membrane</keyword>
<keyword id="KW-0547">Nucleotide-binding</keyword>
<keyword id="KW-1278">Translocase</keyword>
<keyword id="KW-0813">Transport</keyword>